<reference evidence="6" key="1">
    <citation type="submission" date="2006-02" db="EMBL/GenBank/DDBJ databases">
        <authorList>
            <consortium name="NIH - Mammalian Gene Collection (MGC) project"/>
        </authorList>
    </citation>
    <scope>NUCLEOTIDE SEQUENCE [LARGE SCALE MRNA]</scope>
    <source>
        <strain evidence="6">Hereford</strain>
        <tissue evidence="6">Testis</tissue>
    </source>
</reference>
<evidence type="ECO:0000250" key="1">
    <source>
        <dbReference type="UniProtKB" id="Q7ZW57"/>
    </source>
</evidence>
<evidence type="ECO:0000250" key="2">
    <source>
        <dbReference type="UniProtKB" id="Q9DA73"/>
    </source>
</evidence>
<evidence type="ECO:0000255" key="3"/>
<evidence type="ECO:0000256" key="4">
    <source>
        <dbReference type="SAM" id="MobiDB-lite"/>
    </source>
</evidence>
<evidence type="ECO:0000305" key="5"/>
<evidence type="ECO:0000312" key="6">
    <source>
        <dbReference type="EMBL" id="AAI14053.1"/>
    </source>
</evidence>
<comment type="subunit">
    <text evidence="2">Interacts with HEY1.</text>
</comment>
<comment type="subcellular location">
    <subcellularLocation>
        <location evidence="1">Cytoplasm</location>
    </subcellularLocation>
    <subcellularLocation>
        <location evidence="1">Nucleus</location>
    </subcellularLocation>
    <text evidence="1">Uniformly distributed within the cell, but becomes recruited to the nucleus upon binding to HEY1.</text>
</comment>
<comment type="similarity">
    <text evidence="3">Belongs to the CCDC89 family.</text>
</comment>
<comment type="sequence caution" evidence="5">
    <conflict type="erroneous initiation">
        <sequence resource="EMBL-CDS" id="AAI14053"/>
    </conflict>
</comment>
<gene>
    <name evidence="6" type="primary">CCDC89</name>
</gene>
<keyword id="KW-0175">Coiled coil</keyword>
<keyword id="KW-0963">Cytoplasm</keyword>
<keyword id="KW-0539">Nucleus</keyword>
<keyword id="KW-0597">Phosphoprotein</keyword>
<keyword id="KW-1185">Reference proteome</keyword>
<protein>
    <recommendedName>
        <fullName evidence="2">Coiled-coil domain-containing protein 89</fullName>
    </recommendedName>
</protein>
<accession>Q29RS0</accession>
<name>CCD89_BOVIN</name>
<sequence>MPQEESAPRMDTPSSEEPLDKQNRKLEDQEEEMGFKELDGLREALANLRGLSEEDKSERAMLCSRIQEQSQLICILKRRSDEALERCQTLELLNTELEEKRLLEAEELKAKNQQAQKLEERFMTLASNHELMIRFKDEHKRQNAKLREENEKLRLENDQLFSPALKAQEAKVVQLTAQSEALAKELETLQRKYAHDVCQAQAREQELLELQNRQACAHTEETEQLRMQLQSLQQQQQEALQQTAKAEQAHSQQNQELRARLQTVTREKEELLLLSMERGRVLQNKQAEIRQLEEKLKMADVARRHALERFEQEAVAVNSNLRVRELQRRVDGIQAAYDELRLQSEAFKKHSLDLLSKERELNAKLRHLFP</sequence>
<proteinExistence type="evidence at transcript level"/>
<dbReference type="EMBL" id="BC114052">
    <property type="protein sequence ID" value="AAI14053.1"/>
    <property type="status" value="ALT_INIT"/>
    <property type="molecule type" value="mRNA"/>
</dbReference>
<dbReference type="RefSeq" id="NP_001039897.1">
    <property type="nucleotide sequence ID" value="NM_001046432.1"/>
</dbReference>
<dbReference type="SMR" id="Q29RS0"/>
<dbReference type="FunCoup" id="Q29RS0">
    <property type="interactions" value="55"/>
</dbReference>
<dbReference type="PaxDb" id="9913-ENSBTAP00000000582"/>
<dbReference type="GeneID" id="538595"/>
<dbReference type="KEGG" id="bta:538595"/>
<dbReference type="CTD" id="220388"/>
<dbReference type="eggNOG" id="ENOG502QU10">
    <property type="taxonomic scope" value="Eukaryota"/>
</dbReference>
<dbReference type="HOGENOM" id="CLU_066884_0_0_1"/>
<dbReference type="InParanoid" id="Q29RS0"/>
<dbReference type="OrthoDB" id="10020070at2759"/>
<dbReference type="TreeFam" id="TF333232"/>
<dbReference type="Proteomes" id="UP000009136">
    <property type="component" value="Unplaced"/>
</dbReference>
<dbReference type="GO" id="GO:0005737">
    <property type="term" value="C:cytoplasm"/>
    <property type="evidence" value="ECO:0007669"/>
    <property type="project" value="UniProtKB-SubCell"/>
</dbReference>
<dbReference type="GO" id="GO:0005634">
    <property type="term" value="C:nucleus"/>
    <property type="evidence" value="ECO:0007669"/>
    <property type="project" value="UniProtKB-SubCell"/>
</dbReference>
<dbReference type="InterPro" id="IPR043450">
    <property type="entry name" value="CCDC89-like"/>
</dbReference>
<dbReference type="PANTHER" id="PTHR34768">
    <property type="entry name" value="COILED-COIL DOMAIN-CONTAINING PROTEIN 89"/>
    <property type="match status" value="1"/>
</dbReference>
<dbReference type="PANTHER" id="PTHR34768:SF1">
    <property type="entry name" value="COILED-COIL DOMAIN-CONTAINING PROTEIN 89"/>
    <property type="match status" value="1"/>
</dbReference>
<organism>
    <name type="scientific">Bos taurus</name>
    <name type="common">Bovine</name>
    <dbReference type="NCBI Taxonomy" id="9913"/>
    <lineage>
        <taxon>Eukaryota</taxon>
        <taxon>Metazoa</taxon>
        <taxon>Chordata</taxon>
        <taxon>Craniata</taxon>
        <taxon>Vertebrata</taxon>
        <taxon>Euteleostomi</taxon>
        <taxon>Mammalia</taxon>
        <taxon>Eutheria</taxon>
        <taxon>Laurasiatheria</taxon>
        <taxon>Artiodactyla</taxon>
        <taxon>Ruminantia</taxon>
        <taxon>Pecora</taxon>
        <taxon>Bovidae</taxon>
        <taxon>Bovinae</taxon>
        <taxon>Bos</taxon>
    </lineage>
</organism>
<feature type="chain" id="PRO_0000370200" description="Coiled-coil domain-containing protein 89">
    <location>
        <begin position="1"/>
        <end position="370"/>
    </location>
</feature>
<feature type="region of interest" description="Disordered" evidence="4">
    <location>
        <begin position="1"/>
        <end position="38"/>
    </location>
</feature>
<feature type="coiled-coil region" evidence="3">
    <location>
        <begin position="19"/>
        <end position="346"/>
    </location>
</feature>
<feature type="compositionally biased region" description="Basic and acidic residues" evidence="4">
    <location>
        <begin position="18"/>
        <end position="38"/>
    </location>
</feature>
<feature type="modified residue" description="Phosphothreonine" evidence="2">
    <location>
        <position position="12"/>
    </location>
</feature>